<organism>
    <name type="scientific">Vibrio cholerae serotype O1 (strain ATCC 39315 / El Tor Inaba N16961)</name>
    <dbReference type="NCBI Taxonomy" id="243277"/>
    <lineage>
        <taxon>Bacteria</taxon>
        <taxon>Pseudomonadati</taxon>
        <taxon>Pseudomonadota</taxon>
        <taxon>Gammaproteobacteria</taxon>
        <taxon>Vibrionales</taxon>
        <taxon>Vibrionaceae</taxon>
        <taxon>Vibrio</taxon>
    </lineage>
</organism>
<protein>
    <recommendedName>
        <fullName>Toxin coregulated pilus biosynthesis protein B</fullName>
    </recommendedName>
    <alternativeName>
        <fullName>TCP pilus biosynthesis protein TcpB</fullName>
    </alternativeName>
</protein>
<gene>
    <name type="primary">tcpB</name>
    <name type="ordered locus">VC_0829</name>
</gene>
<evidence type="ECO:0000256" key="1">
    <source>
        <dbReference type="SAM" id="MobiDB-lite"/>
    </source>
</evidence>
<evidence type="ECO:0007829" key="2">
    <source>
        <dbReference type="PDB" id="7W63"/>
    </source>
</evidence>
<evidence type="ECO:0007829" key="3">
    <source>
        <dbReference type="PDB" id="7W64"/>
    </source>
</evidence>
<keyword id="KW-0002">3D-structure</keyword>
<keyword id="KW-1185">Reference proteome</keyword>
<feature type="chain" id="PRO_0000072464" description="Toxin coregulated pilus biosynthesis protein B">
    <location>
        <begin position="1"/>
        <end position="430"/>
    </location>
</feature>
<feature type="region of interest" description="Disordered" evidence="1">
    <location>
        <begin position="351"/>
        <end position="371"/>
    </location>
</feature>
<feature type="compositionally biased region" description="Polar residues" evidence="1">
    <location>
        <begin position="351"/>
        <end position="366"/>
    </location>
</feature>
<feature type="sequence variant" description="In strain: Z17561.">
    <original>L</original>
    <variation>P</variation>
    <location>
        <position position="93"/>
    </location>
</feature>
<feature type="sequence variant" description="In strain: Z17561.">
    <original>V</original>
    <variation>A</variation>
    <location>
        <position position="202"/>
    </location>
</feature>
<feature type="sequence variant" description="In strain: Z17561.">
    <original>T</original>
    <variation>S</variation>
    <location>
        <position position="254"/>
    </location>
</feature>
<feature type="sequence variant" description="In strain: Z17561.">
    <original>KS</original>
    <variation>NA</variation>
    <location>
        <begin position="266"/>
        <end position="267"/>
    </location>
</feature>
<feature type="helix" evidence="3">
    <location>
        <begin position="43"/>
        <end position="59"/>
    </location>
</feature>
<feature type="strand" evidence="3">
    <location>
        <begin position="61"/>
        <end position="63"/>
    </location>
</feature>
<feature type="helix" evidence="3">
    <location>
        <begin position="69"/>
        <end position="71"/>
    </location>
</feature>
<feature type="strand" evidence="3">
    <location>
        <begin position="76"/>
        <end position="80"/>
    </location>
</feature>
<feature type="helix" evidence="3">
    <location>
        <begin position="85"/>
        <end position="87"/>
    </location>
</feature>
<feature type="strand" evidence="3">
    <location>
        <begin position="92"/>
        <end position="94"/>
    </location>
</feature>
<feature type="strand" evidence="3">
    <location>
        <begin position="104"/>
        <end position="106"/>
    </location>
</feature>
<feature type="strand" evidence="3">
    <location>
        <begin position="121"/>
        <end position="134"/>
    </location>
</feature>
<feature type="strand" evidence="3">
    <location>
        <begin position="145"/>
        <end position="156"/>
    </location>
</feature>
<feature type="helix" evidence="3">
    <location>
        <begin position="161"/>
        <end position="163"/>
    </location>
</feature>
<feature type="helix" evidence="3">
    <location>
        <begin position="164"/>
        <end position="177"/>
    </location>
</feature>
<feature type="strand" evidence="3">
    <location>
        <begin position="180"/>
        <end position="184"/>
    </location>
</feature>
<feature type="strand" evidence="3">
    <location>
        <begin position="186"/>
        <end position="192"/>
    </location>
</feature>
<feature type="strand" evidence="3">
    <location>
        <begin position="194"/>
        <end position="204"/>
    </location>
</feature>
<feature type="helix" evidence="3">
    <location>
        <begin position="205"/>
        <end position="210"/>
    </location>
</feature>
<feature type="helix" evidence="3">
    <location>
        <begin position="212"/>
        <end position="221"/>
    </location>
</feature>
<feature type="strand" evidence="3">
    <location>
        <begin position="226"/>
        <end position="232"/>
    </location>
</feature>
<feature type="strand" evidence="3">
    <location>
        <begin position="234"/>
        <end position="236"/>
    </location>
</feature>
<feature type="strand" evidence="3">
    <location>
        <begin position="256"/>
        <end position="258"/>
    </location>
</feature>
<feature type="strand" evidence="3">
    <location>
        <begin position="264"/>
        <end position="274"/>
    </location>
</feature>
<feature type="turn" evidence="3">
    <location>
        <begin position="275"/>
        <end position="278"/>
    </location>
</feature>
<feature type="strand" evidence="3">
    <location>
        <begin position="279"/>
        <end position="283"/>
    </location>
</feature>
<feature type="strand" evidence="3">
    <location>
        <begin position="287"/>
        <end position="291"/>
    </location>
</feature>
<feature type="strand" evidence="3">
    <location>
        <begin position="293"/>
        <end position="299"/>
    </location>
</feature>
<feature type="strand" evidence="3">
    <location>
        <begin position="302"/>
        <end position="304"/>
    </location>
</feature>
<feature type="strand" evidence="3">
    <location>
        <begin position="308"/>
        <end position="312"/>
    </location>
</feature>
<feature type="strand" evidence="3">
    <location>
        <begin position="321"/>
        <end position="324"/>
    </location>
</feature>
<feature type="strand" evidence="3">
    <location>
        <begin position="333"/>
        <end position="344"/>
    </location>
</feature>
<feature type="turn" evidence="3">
    <location>
        <begin position="345"/>
        <end position="348"/>
    </location>
</feature>
<feature type="strand" evidence="3">
    <location>
        <begin position="349"/>
        <end position="351"/>
    </location>
</feature>
<feature type="strand" evidence="2">
    <location>
        <begin position="368"/>
        <end position="370"/>
    </location>
</feature>
<feature type="strand" evidence="3">
    <location>
        <begin position="376"/>
        <end position="386"/>
    </location>
</feature>
<feature type="strand" evidence="3">
    <location>
        <begin position="389"/>
        <end position="398"/>
    </location>
</feature>
<feature type="strand" evidence="3">
    <location>
        <begin position="400"/>
        <end position="403"/>
    </location>
</feature>
<feature type="strand" evidence="3">
    <location>
        <begin position="405"/>
        <end position="410"/>
    </location>
</feature>
<feature type="strand" evidence="3">
    <location>
        <begin position="413"/>
        <end position="416"/>
    </location>
</feature>
<feature type="strand" evidence="3">
    <location>
        <begin position="418"/>
        <end position="429"/>
    </location>
</feature>
<sequence>MRKYQQGVGLLEAILASAVLGMALVAAGSYYKREAELMIKSSNAFDVIELSSQIQRYASLSKINNRTNPILKDNKAKEFKDADLKWLKLENCLTAGDVPTTGNNNDLQDQFIACDADYRKGDLSYFGSQFEFSTYVHPSNPEIQRQIKQVVSYFQYRGMERAFIGDAAGYVISEAKKKGFSAQDYRIVLIEPDRVGYFESNVISYEEFIENPSARENFLLKATKDRTLALAVSLAQTGEIAMQRDGSVAFLEDTELCWDTAAGSAKSCLSVRYDTVGNKTELDLKQIDVVSAKGLSFESDGKTKTPVVSTYETFQDGGRAKTINAIECPTGLNNRFAAVVSSFSTAGQNANFSSESAKDSQGTTQKDGSKGPHALLSGISLNWTLTNKVWDVTASIGIESGILPTSGIDSGSLLRNPKSLSFIAFQWCEN</sequence>
<dbReference type="EMBL" id="X64098">
    <property type="protein sequence ID" value="CAA45456.1"/>
    <property type="molecule type" value="Genomic_DNA"/>
</dbReference>
<dbReference type="EMBL" id="X74730">
    <property type="protein sequence ID" value="CAA52746.1"/>
    <property type="molecule type" value="Genomic_DNA"/>
</dbReference>
<dbReference type="EMBL" id="AE003852">
    <property type="protein sequence ID" value="AAF93992.1"/>
    <property type="molecule type" value="Genomic_DNA"/>
</dbReference>
<dbReference type="EMBL" id="M33514">
    <property type="status" value="NOT_ANNOTATED_CDS"/>
    <property type="molecule type" value="Genomic_DNA"/>
</dbReference>
<dbReference type="PIR" id="JC4720">
    <property type="entry name" value="JC4720"/>
</dbReference>
<dbReference type="RefSeq" id="NP_230477.1">
    <property type="nucleotide sequence ID" value="NC_002505.1"/>
</dbReference>
<dbReference type="RefSeq" id="WP_001234004.1">
    <property type="nucleotide sequence ID" value="NZ_LT906614.1"/>
</dbReference>
<dbReference type="PDB" id="7W63">
    <property type="method" value="X-ray"/>
    <property type="resolution" value="2.32 A"/>
    <property type="chains" value="A/B/C=36-430"/>
</dbReference>
<dbReference type="PDB" id="7W64">
    <property type="method" value="X-ray"/>
    <property type="resolution" value="2.30 A"/>
    <property type="chains" value="A/B/C/D/E/F=36-430"/>
</dbReference>
<dbReference type="PDB" id="7W65">
    <property type="method" value="X-ray"/>
    <property type="resolution" value="4.05 A"/>
    <property type="chains" value="A/B/C=36-430"/>
</dbReference>
<dbReference type="PDBsum" id="7W63"/>
<dbReference type="PDBsum" id="7W64"/>
<dbReference type="PDBsum" id="7W65"/>
<dbReference type="SMR" id="P23476"/>
<dbReference type="STRING" id="243277.VC_0829"/>
<dbReference type="DNASU" id="2614496"/>
<dbReference type="EnsemblBacteria" id="AAF93992">
    <property type="protein sequence ID" value="AAF93992"/>
    <property type="gene ID" value="VC_0829"/>
</dbReference>
<dbReference type="KEGG" id="vch:VC_0829"/>
<dbReference type="PATRIC" id="fig|243277.26.peg.790"/>
<dbReference type="eggNOG" id="ENOG5031N69">
    <property type="taxonomic scope" value="Bacteria"/>
</dbReference>
<dbReference type="HOGENOM" id="CLU_637675_0_0_6"/>
<dbReference type="Proteomes" id="UP000000584">
    <property type="component" value="Chromosome 1"/>
</dbReference>
<reference key="1">
    <citation type="journal article" date="1996" name="Gene">
        <title>Comparison of the promoter proximal regions of the toxin-co-regulated tcp gene cluster in classical and El Tor strains of Vibrio cholerae O1.</title>
        <authorList>
            <person name="Ogierman M.A."/>
            <person name="Voss E."/>
            <person name="Meaney C."/>
            <person name="Faast R."/>
            <person name="Attridge S.R."/>
            <person name="Manning P.A."/>
        </authorList>
    </citation>
    <scope>NUCLEOTIDE SEQUENCE [GENOMIC DNA]</scope>
    <source>
        <strain>Classical Inaba Z17561 / Serotype O1</strain>
        <strain>El Tor H1 / Serotype O1</strain>
    </source>
</reference>
<reference key="2">
    <citation type="journal article" date="2000" name="Nature">
        <title>DNA sequence of both chromosomes of the cholera pathogen Vibrio cholerae.</title>
        <authorList>
            <person name="Heidelberg J.F."/>
            <person name="Eisen J.A."/>
            <person name="Nelson W.C."/>
            <person name="Clayton R.A."/>
            <person name="Gwinn M.L."/>
            <person name="Dodson R.J."/>
            <person name="Haft D.H."/>
            <person name="Hickey E.K."/>
            <person name="Peterson J.D."/>
            <person name="Umayam L.A."/>
            <person name="Gill S.R."/>
            <person name="Nelson K.E."/>
            <person name="Read T.D."/>
            <person name="Tettelin H."/>
            <person name="Richardson D.L."/>
            <person name="Ermolaeva M.D."/>
            <person name="Vamathevan J.J."/>
            <person name="Bass S."/>
            <person name="Qin H."/>
            <person name="Dragoi I."/>
            <person name="Sellers P."/>
            <person name="McDonald L.A."/>
            <person name="Utterback T.R."/>
            <person name="Fleischmann R.D."/>
            <person name="Nierman W.C."/>
            <person name="White O."/>
            <person name="Salzberg S.L."/>
            <person name="Smith H.O."/>
            <person name="Colwell R.R."/>
            <person name="Mekalanos J.J."/>
            <person name="Venter J.C."/>
            <person name="Fraser C.M."/>
        </authorList>
    </citation>
    <scope>NUCLEOTIDE SEQUENCE [LARGE SCALE GENOMIC DNA]</scope>
    <source>
        <strain>ATCC 39315 / El Tor Inaba N16961</strain>
    </source>
</reference>
<reference key="3">
    <citation type="journal article" date="1989" name="Gene">
        <title>Nucleotide sequence of the structural gene, tcpA, for a major pilin subunit of Vibrio cholerae.</title>
        <authorList>
            <person name="Faast R."/>
            <person name="Ogierman M.A."/>
            <person name="Stroeher U.H."/>
            <person name="Manning P.A."/>
        </authorList>
    </citation>
    <scope>PRELIMINARY NUCLEOTIDE SEQUENCE [GENOMIC DNA] OF 1-50</scope>
</reference>
<proteinExistence type="evidence at protein level"/>
<comment type="function">
    <text>Involved in TCP pilus biogenesis.</text>
</comment>
<accession>P23476</accession>
<accession>Q56665</accession>
<name>TCPB_VIBCH</name>